<comment type="function">
    <text evidence="1">Responsible for synthesis of pseudouridine from uracil-55 in the psi GC loop of transfer RNAs.</text>
</comment>
<comment type="catalytic activity">
    <reaction evidence="1">
        <text>uridine(55) in tRNA = pseudouridine(55) in tRNA</text>
        <dbReference type="Rhea" id="RHEA:42532"/>
        <dbReference type="Rhea" id="RHEA-COMP:10101"/>
        <dbReference type="Rhea" id="RHEA-COMP:10102"/>
        <dbReference type="ChEBI" id="CHEBI:65314"/>
        <dbReference type="ChEBI" id="CHEBI:65315"/>
        <dbReference type="EC" id="5.4.99.25"/>
    </reaction>
</comment>
<comment type="similarity">
    <text evidence="1">Belongs to the pseudouridine synthase TruB family. Type 1 subfamily.</text>
</comment>
<dbReference type="EC" id="5.4.99.25" evidence="1"/>
<dbReference type="EMBL" id="AE008691">
    <property type="protein sequence ID" value="AAM24612.1"/>
    <property type="molecule type" value="Genomic_DNA"/>
</dbReference>
<dbReference type="RefSeq" id="WP_009610688.1">
    <property type="nucleotide sequence ID" value="NC_003869.1"/>
</dbReference>
<dbReference type="SMR" id="Q8RA40"/>
<dbReference type="STRING" id="273068.TTE1390"/>
<dbReference type="KEGG" id="tte:TTE1390"/>
<dbReference type="eggNOG" id="COG0130">
    <property type="taxonomic scope" value="Bacteria"/>
</dbReference>
<dbReference type="HOGENOM" id="CLU_032087_0_1_9"/>
<dbReference type="OrthoDB" id="9802309at2"/>
<dbReference type="Proteomes" id="UP000000555">
    <property type="component" value="Chromosome"/>
</dbReference>
<dbReference type="GO" id="GO:0003723">
    <property type="term" value="F:RNA binding"/>
    <property type="evidence" value="ECO:0007669"/>
    <property type="project" value="InterPro"/>
</dbReference>
<dbReference type="GO" id="GO:0160148">
    <property type="term" value="F:tRNA pseudouridine(55) synthase activity"/>
    <property type="evidence" value="ECO:0007669"/>
    <property type="project" value="UniProtKB-EC"/>
</dbReference>
<dbReference type="GO" id="GO:1990481">
    <property type="term" value="P:mRNA pseudouridine synthesis"/>
    <property type="evidence" value="ECO:0007669"/>
    <property type="project" value="TreeGrafter"/>
</dbReference>
<dbReference type="GO" id="GO:0031119">
    <property type="term" value="P:tRNA pseudouridine synthesis"/>
    <property type="evidence" value="ECO:0007669"/>
    <property type="project" value="UniProtKB-UniRule"/>
</dbReference>
<dbReference type="CDD" id="cd02573">
    <property type="entry name" value="PseudoU_synth_EcTruB"/>
    <property type="match status" value="1"/>
</dbReference>
<dbReference type="CDD" id="cd21152">
    <property type="entry name" value="PUA_TruB_bacterial"/>
    <property type="match status" value="1"/>
</dbReference>
<dbReference type="FunFam" id="3.30.2350.10:FF:000011">
    <property type="entry name" value="tRNA pseudouridine synthase B"/>
    <property type="match status" value="1"/>
</dbReference>
<dbReference type="Gene3D" id="3.30.2350.10">
    <property type="entry name" value="Pseudouridine synthase"/>
    <property type="match status" value="1"/>
</dbReference>
<dbReference type="Gene3D" id="2.30.130.10">
    <property type="entry name" value="PUA domain"/>
    <property type="match status" value="1"/>
</dbReference>
<dbReference type="HAMAP" id="MF_01080">
    <property type="entry name" value="TruB_bact"/>
    <property type="match status" value="1"/>
</dbReference>
<dbReference type="InterPro" id="IPR020103">
    <property type="entry name" value="PsdUridine_synth_cat_dom_sf"/>
</dbReference>
<dbReference type="InterPro" id="IPR002501">
    <property type="entry name" value="PsdUridine_synth_N"/>
</dbReference>
<dbReference type="InterPro" id="IPR015947">
    <property type="entry name" value="PUA-like_sf"/>
</dbReference>
<dbReference type="InterPro" id="IPR036974">
    <property type="entry name" value="PUA_sf"/>
</dbReference>
<dbReference type="InterPro" id="IPR014780">
    <property type="entry name" value="tRNA_psdUridine_synth_TruB"/>
</dbReference>
<dbReference type="InterPro" id="IPR015240">
    <property type="entry name" value="tRNA_sdUridine_synth_fam1_C"/>
</dbReference>
<dbReference type="InterPro" id="IPR032819">
    <property type="entry name" value="TruB_C"/>
</dbReference>
<dbReference type="NCBIfam" id="TIGR00431">
    <property type="entry name" value="TruB"/>
    <property type="match status" value="1"/>
</dbReference>
<dbReference type="PANTHER" id="PTHR13767:SF2">
    <property type="entry name" value="PSEUDOURIDYLATE SYNTHASE TRUB1"/>
    <property type="match status" value="1"/>
</dbReference>
<dbReference type="PANTHER" id="PTHR13767">
    <property type="entry name" value="TRNA-PSEUDOURIDINE SYNTHASE"/>
    <property type="match status" value="1"/>
</dbReference>
<dbReference type="Pfam" id="PF09157">
    <property type="entry name" value="TruB-C_2"/>
    <property type="match status" value="1"/>
</dbReference>
<dbReference type="Pfam" id="PF16198">
    <property type="entry name" value="TruB_C_2"/>
    <property type="match status" value="1"/>
</dbReference>
<dbReference type="Pfam" id="PF01509">
    <property type="entry name" value="TruB_N"/>
    <property type="match status" value="1"/>
</dbReference>
<dbReference type="SUPFAM" id="SSF55120">
    <property type="entry name" value="Pseudouridine synthase"/>
    <property type="match status" value="1"/>
</dbReference>
<dbReference type="SUPFAM" id="SSF88697">
    <property type="entry name" value="PUA domain-like"/>
    <property type="match status" value="1"/>
</dbReference>
<accession>Q8RA40</accession>
<keyword id="KW-0413">Isomerase</keyword>
<keyword id="KW-1185">Reference proteome</keyword>
<keyword id="KW-0819">tRNA processing</keyword>
<gene>
    <name evidence="1" type="primary">truB</name>
    <name type="ordered locus">TTE1390</name>
</gene>
<evidence type="ECO:0000255" key="1">
    <source>
        <dbReference type="HAMAP-Rule" id="MF_01080"/>
    </source>
</evidence>
<feature type="chain" id="PRO_0000121932" description="tRNA pseudouridine synthase B">
    <location>
        <begin position="1"/>
        <end position="285"/>
    </location>
</feature>
<feature type="active site" description="Nucleophile" evidence="1">
    <location>
        <position position="40"/>
    </location>
</feature>
<sequence length="285" mass="32188">MSVDGVLNVLKPPGMTSHDVVDFIRKIYGIKKVGHTGTLDPDAAGVLPVCMGRATKFTSYLMEHDKRYRFEITFGFSTDTLDKSGKIVESGPVPLFTLEKLQEVLSQFKGEIQQIPPIYSAKKVKGKKLYEYARKGEEVEIPPIKVTVYELELIKYDAPHHLLLDVKCSKGTYVRALVRDICKKLEVPGHMSFLIRTEVGDFDIESSYTLEEIKEGKAEVQPVDKFIKFPSVELDEVSSNKILNGQFIRNTYNVENSLVKLYDNHGIFIGIGVAEGEKIRPKRLF</sequence>
<organism>
    <name type="scientific">Caldanaerobacter subterraneus subsp. tengcongensis (strain DSM 15242 / JCM 11007 / NBRC 100824 / MB4)</name>
    <name type="common">Thermoanaerobacter tengcongensis</name>
    <dbReference type="NCBI Taxonomy" id="273068"/>
    <lineage>
        <taxon>Bacteria</taxon>
        <taxon>Bacillati</taxon>
        <taxon>Bacillota</taxon>
        <taxon>Clostridia</taxon>
        <taxon>Thermoanaerobacterales</taxon>
        <taxon>Thermoanaerobacteraceae</taxon>
        <taxon>Caldanaerobacter</taxon>
    </lineage>
</organism>
<reference key="1">
    <citation type="journal article" date="2002" name="Genome Res.">
        <title>A complete sequence of the T. tengcongensis genome.</title>
        <authorList>
            <person name="Bao Q."/>
            <person name="Tian Y."/>
            <person name="Li W."/>
            <person name="Xu Z."/>
            <person name="Xuan Z."/>
            <person name="Hu S."/>
            <person name="Dong W."/>
            <person name="Yang J."/>
            <person name="Chen Y."/>
            <person name="Xue Y."/>
            <person name="Xu Y."/>
            <person name="Lai X."/>
            <person name="Huang L."/>
            <person name="Dong X."/>
            <person name="Ma Y."/>
            <person name="Ling L."/>
            <person name="Tan H."/>
            <person name="Chen R."/>
            <person name="Wang J."/>
            <person name="Yu J."/>
            <person name="Yang H."/>
        </authorList>
    </citation>
    <scope>NUCLEOTIDE SEQUENCE [LARGE SCALE GENOMIC DNA]</scope>
    <source>
        <strain>DSM 15242 / JCM 11007 / NBRC 100824 / MB4</strain>
    </source>
</reference>
<proteinExistence type="inferred from homology"/>
<protein>
    <recommendedName>
        <fullName evidence="1">tRNA pseudouridine synthase B</fullName>
        <ecNumber evidence="1">5.4.99.25</ecNumber>
    </recommendedName>
    <alternativeName>
        <fullName evidence="1">tRNA pseudouridine(55) synthase</fullName>
        <shortName evidence="1">Psi55 synthase</shortName>
    </alternativeName>
    <alternativeName>
        <fullName evidence="1">tRNA pseudouridylate synthase</fullName>
    </alternativeName>
    <alternativeName>
        <fullName evidence="1">tRNA-uridine isomerase</fullName>
    </alternativeName>
</protein>
<name>TRUB_CALS4</name>